<comment type="similarity">
    <text evidence="1">Belongs to the UPF0251 family.</text>
</comment>
<gene>
    <name type="ordered locus">PF0620</name>
</gene>
<keyword id="KW-1185">Reference proteome</keyword>
<name>Y620_PYRFU</name>
<evidence type="ECO:0000305" key="1"/>
<organism>
    <name type="scientific">Pyrococcus furiosus (strain ATCC 43587 / DSM 3638 / JCM 8422 / Vc1)</name>
    <dbReference type="NCBI Taxonomy" id="186497"/>
    <lineage>
        <taxon>Archaea</taxon>
        <taxon>Methanobacteriati</taxon>
        <taxon>Methanobacteriota</taxon>
        <taxon>Thermococci</taxon>
        <taxon>Thermococcales</taxon>
        <taxon>Thermococcaceae</taxon>
        <taxon>Pyrococcus</taxon>
    </lineage>
</organism>
<reference key="1">
    <citation type="journal article" date="1999" name="Genetics">
        <title>Divergence of the hyperthermophilic archaea Pyrococcus furiosus and P. horikoshii inferred from complete genomic sequences.</title>
        <authorList>
            <person name="Maeder D.L."/>
            <person name="Weiss R.B."/>
            <person name="Dunn D.M."/>
            <person name="Cherry J.L."/>
            <person name="Gonzalez J.M."/>
            <person name="DiRuggiero J."/>
            <person name="Robb F.T."/>
        </authorList>
    </citation>
    <scope>NUCLEOTIDE SEQUENCE [LARGE SCALE GENOMIC DNA]</scope>
    <source>
        <strain>ATCC 43587 / DSM 3638 / JCM 8422 / Vc1</strain>
    </source>
</reference>
<sequence length="108" mass="12647">MPRWGRGRRRKMRMIEFIPYARHFYPALPRFGPPKPPIIMTYEEFEALRLVDYEGLTQEEAGKRMGVSRGTIWRALTSARKKVAQMLVEGRELIILPQGNEVIKSDEE</sequence>
<accession>Q8U352</accession>
<protein>
    <recommendedName>
        <fullName>UPF0251 protein PF0620</fullName>
    </recommendedName>
</protein>
<feature type="chain" id="PRO_0000147583" description="UPF0251 protein PF0620">
    <location>
        <begin position="1"/>
        <end position="108"/>
    </location>
</feature>
<proteinExistence type="inferred from homology"/>
<dbReference type="EMBL" id="AE009950">
    <property type="protein sequence ID" value="AAL80744.1"/>
    <property type="molecule type" value="Genomic_DNA"/>
</dbReference>
<dbReference type="RefSeq" id="WP_011011740.1">
    <property type="nucleotide sequence ID" value="NZ_CP023154.1"/>
</dbReference>
<dbReference type="SMR" id="Q8U352"/>
<dbReference type="STRING" id="186497.PF0620"/>
<dbReference type="PaxDb" id="186497-PF0620"/>
<dbReference type="KEGG" id="pfu:PF0620"/>
<dbReference type="PATRIC" id="fig|186497.12.peg.651"/>
<dbReference type="eggNOG" id="arCOG02238">
    <property type="taxonomic scope" value="Archaea"/>
</dbReference>
<dbReference type="HOGENOM" id="CLU_094511_2_0_2"/>
<dbReference type="OrthoDB" id="74471at2157"/>
<dbReference type="PhylomeDB" id="Q8U352"/>
<dbReference type="Proteomes" id="UP000001013">
    <property type="component" value="Chromosome"/>
</dbReference>
<dbReference type="Gene3D" id="1.10.10.10">
    <property type="entry name" value="Winged helix-like DNA-binding domain superfamily/Winged helix DNA-binding domain"/>
    <property type="match status" value="1"/>
</dbReference>
<dbReference type="HAMAP" id="MF_00674">
    <property type="entry name" value="UPF0251"/>
    <property type="match status" value="1"/>
</dbReference>
<dbReference type="InterPro" id="IPR013324">
    <property type="entry name" value="RNA_pol_sigma_r3/r4-like"/>
</dbReference>
<dbReference type="InterPro" id="IPR002852">
    <property type="entry name" value="UPF0251"/>
</dbReference>
<dbReference type="InterPro" id="IPR036388">
    <property type="entry name" value="WH-like_DNA-bd_sf"/>
</dbReference>
<dbReference type="NCBIfam" id="NF003257">
    <property type="entry name" value="PRK04217.1"/>
    <property type="match status" value="1"/>
</dbReference>
<dbReference type="PANTHER" id="PTHR37478">
    <property type="match status" value="1"/>
</dbReference>
<dbReference type="PANTHER" id="PTHR37478:SF2">
    <property type="entry name" value="UPF0251 PROTEIN TK0562"/>
    <property type="match status" value="1"/>
</dbReference>
<dbReference type="Pfam" id="PF02001">
    <property type="entry name" value="DUF134"/>
    <property type="match status" value="1"/>
</dbReference>
<dbReference type="SUPFAM" id="SSF88659">
    <property type="entry name" value="Sigma3 and sigma4 domains of RNA polymerase sigma factors"/>
    <property type="match status" value="1"/>
</dbReference>